<gene>
    <name evidence="5" type="primary">nsrE</name>
    <name type="ORF">P174DRAFT_372388</name>
</gene>
<protein>
    <recommendedName>
        <fullName evidence="5">Decarboxylase nsrE</fullName>
        <ecNumber evidence="3">4.1.1.-</ecNumber>
    </recommendedName>
    <alternativeName>
        <fullName evidence="5">Neosartorin biosynthesis cluster protein E</fullName>
    </alternativeName>
</protein>
<proteinExistence type="evidence at protein level"/>
<comment type="function">
    <text evidence="2 3 4">Decarboxylase; part of the gene cluster that mediates the biosynthesis of the tetrahydroxanthone dimer neosartorin, which exhibits antibacterial activity (PubMed:30394754, PubMed:32105084, PubMed:33891392). The two different monomeric units appear to be synthesized by the same set of enzymes, among which the Baeyer-Villiger monooxygenase nsrF is the key enzyme for the divergence of the biosynthetic routes (PubMed:32105084). The pathway begins with the synthesis of atrochrysone thioester by the polyketide synthase nsrB (PubMed:32105084). The atrochrysone carboxyl ACP thioesterase nsrC then breaks the thioester bond and releases the atrochrysone carboxylic acid from AacuL (PubMed:32105084). Atrochrysone carboxylic acid is decarboxylated by the decarboxylase nsrE, and oxidized by the anthrone oxygenase nsrD to yield emodin (PubMed:32105084). Emodin is then reduced to emodin hydroquinone by the oxidoreductase nsrR (PubMed:32105084). A-ring reduction by the short chain dehydrogenase nsrJ, dehydration by the scytalone dehydratase-like protein nsrI and probable spontaneous re-oxidation, results in overall deoxygenation to chrysophanol (PubMed:32105084). The Baeyer-Villiger monooxygenase nsrF accepts chrysophanol as a substrate to insert one oxygen atom at two different positions to yield the precursors of both monomric units (PubMed:30394754, PubMed:32105084, PubMed:33891392). NsrF is promiscuous/flexible in interacting with the 2 (non methylated and methylated) aromatic rings of chrysophanol, thus diverging the biosynthetic pathway at this point (PubMed:30394754, PubMed:32105084, PubMed:33891392). After the hydrolysis of the lactones, methylesterification by the methyltransferase nsrG yields respectively moniliphenone and 2,2',6'-trihydroxy-4-methyl-6-methoxya-cyldiphenylmethanone (PubMed:30394754, PubMed:32105084). The next steps are the hydroxylation by the FAD-dependent monooxygenase nsrK, followed by isomerization by the monooxygenase nsrQ (PubMed:32105084). The short chain dehydrogenase/reductase nsrO then catalyzes the C-5 ketoreduction to give the xanthone skeleton of blennolide C and 5-acetylblennolide A (PubMed:32105084). The acetyltransferase nsrL has a strict substrate specificity and uses only blennolide A but not blennolide C to yield 5-acetylblennolide A as the single-acetylated product (PubMed:30394754). In the final step of the biosynthesis, the heterodimerization of the 2 xanthones, blennolide C and 5-acetylblennolide A, is catalyzed by the cytochrome P450 monooxygenase nsrP (PubMed:30394754). NsrP can utilize at least three different xanthones as its substrates to perform the dimerization reaction (PubMed:30394754).</text>
</comment>
<comment type="catalytic activity">
    <reaction evidence="3">
        <text>atrochrysone carboxylate + H(+) = atrochrysone + CO2</text>
        <dbReference type="Rhea" id="RHEA:64264"/>
        <dbReference type="ChEBI" id="CHEBI:15378"/>
        <dbReference type="ChEBI" id="CHEBI:16526"/>
        <dbReference type="ChEBI" id="CHEBI:149713"/>
        <dbReference type="ChEBI" id="CHEBI:150016"/>
    </reaction>
    <physiologicalReaction direction="left-to-right" evidence="3">
        <dbReference type="Rhea" id="RHEA:64265"/>
    </physiologicalReaction>
</comment>
<comment type="pathway">
    <text evidence="3">Secondary metabolite biosynthesis.</text>
</comment>
<comment type="similarity">
    <text evidence="6">Belongs to the tpcK family.</text>
</comment>
<dbReference type="EC" id="4.1.1.-" evidence="3"/>
<dbReference type="EMBL" id="MSZS01000005">
    <property type="protein sequence ID" value="PKX92305.1"/>
    <property type="molecule type" value="Genomic_DNA"/>
</dbReference>
<dbReference type="SMR" id="A0A2I1C3W7"/>
<dbReference type="STRING" id="1392255.A0A2I1C3W7"/>
<dbReference type="VEuPathDB" id="FungiDB:P174DRAFT_372388"/>
<dbReference type="OMA" id="GIRRWTQ"/>
<dbReference type="OrthoDB" id="3454835at2759"/>
<dbReference type="Proteomes" id="UP000234474">
    <property type="component" value="Unassembled WGS sequence"/>
</dbReference>
<dbReference type="GO" id="GO:0016829">
    <property type="term" value="F:lyase activity"/>
    <property type="evidence" value="ECO:0007669"/>
    <property type="project" value="UniProtKB-KW"/>
</dbReference>
<dbReference type="GO" id="GO:0016491">
    <property type="term" value="F:oxidoreductase activity"/>
    <property type="evidence" value="ECO:0007669"/>
    <property type="project" value="InterPro"/>
</dbReference>
<dbReference type="Gene3D" id="3.30.70.100">
    <property type="match status" value="1"/>
</dbReference>
<dbReference type="InterPro" id="IPR011008">
    <property type="entry name" value="Dimeric_a/b-barrel"/>
</dbReference>
<dbReference type="InterPro" id="IPR009799">
    <property type="entry name" value="EthD_dom"/>
</dbReference>
<dbReference type="Pfam" id="PF07110">
    <property type="entry name" value="EthD"/>
    <property type="match status" value="1"/>
</dbReference>
<dbReference type="SUPFAM" id="SSF54909">
    <property type="entry name" value="Dimeric alpha+beta barrel"/>
    <property type="match status" value="1"/>
</dbReference>
<name>NSRE_ASPN1</name>
<reference key="1">
    <citation type="journal article" date="2018" name="Proc. Natl. Acad. Sci. U.S.A.">
        <title>Linking secondary metabolites to gene clusters through genome sequencing of six diverse Aspergillus species.</title>
        <authorList>
            <person name="Kjaerboelling I."/>
            <person name="Vesth T.C."/>
            <person name="Frisvad J.C."/>
            <person name="Nybo J.L."/>
            <person name="Theobald S."/>
            <person name="Kuo A."/>
            <person name="Bowyer P."/>
            <person name="Matsuda Y."/>
            <person name="Mondo S."/>
            <person name="Lyhne E.K."/>
            <person name="Kogle M.E."/>
            <person name="Clum A."/>
            <person name="Lipzen A."/>
            <person name="Salamov A."/>
            <person name="Ngan C.Y."/>
            <person name="Daum C."/>
            <person name="Chiniquy J."/>
            <person name="Barry K."/>
            <person name="LaButti K."/>
            <person name="Haridas S."/>
            <person name="Simmons B.A."/>
            <person name="Magnuson J.K."/>
            <person name="Mortensen U.H."/>
            <person name="Larsen T.O."/>
            <person name="Grigoriev I.V."/>
            <person name="Baker S.E."/>
            <person name="Andersen M.R."/>
        </authorList>
    </citation>
    <scope>NUCLEOTIDE SEQUENCE [LARGE SCALE GENOMIC DNA]</scope>
    <source>
        <strain>IBT 16806</strain>
    </source>
</reference>
<reference key="2">
    <citation type="journal article" date="2018" name="Org. Lett.">
        <title>Genetic characterization of neosartorin biosynthesis provides insight into heterodimeric natural product generation.</title>
        <authorList>
            <person name="Matsuda Y."/>
            <person name="Gotfredsen C.H."/>
            <person name="Larsen T.O."/>
        </authorList>
    </citation>
    <scope>FUNCTION</scope>
</reference>
<reference key="3">
    <citation type="journal article" date="2020" name="Org. Lett.">
        <title>Unraveling the fungal strategy for tetrahydroxanthone biosynthesis and diversification.</title>
        <authorList>
            <person name="Wei X."/>
            <person name="Matsuda Y."/>
        </authorList>
    </citation>
    <scope>FUNCTION</scope>
    <scope>CATALYTIC ACTIVITY</scope>
    <scope>PATHWAY</scope>
</reference>
<reference key="4">
    <citation type="journal article" date="2021" name="J. Nat. Prod.">
        <title>Heterologous biosynthesis of tetrahydroxanthone dimers: determination of key factors for selective or divergent synthesis.</title>
        <authorList>
            <person name="Wei X."/>
            <person name="Chen X."/>
            <person name="Chen L."/>
            <person name="Yan D."/>
            <person name="Wang W.G."/>
            <person name="Matsuda Y."/>
        </authorList>
    </citation>
    <scope>FUNCTION</scope>
</reference>
<accession>A0A2I1C3W7</accession>
<keyword id="KW-0456">Lyase</keyword>
<keyword id="KW-1185">Reference proteome</keyword>
<organism>
    <name type="scientific">Aspergillus novofumigatus (strain IBT 16806)</name>
    <dbReference type="NCBI Taxonomy" id="1392255"/>
    <lineage>
        <taxon>Eukaryota</taxon>
        <taxon>Fungi</taxon>
        <taxon>Dikarya</taxon>
        <taxon>Ascomycota</taxon>
        <taxon>Pezizomycotina</taxon>
        <taxon>Eurotiomycetes</taxon>
        <taxon>Eurotiomycetidae</taxon>
        <taxon>Eurotiales</taxon>
        <taxon>Aspergillaceae</taxon>
        <taxon>Aspergillus</taxon>
        <taxon>Aspergillus subgen. Fumigati</taxon>
    </lineage>
</organism>
<feature type="chain" id="PRO_0000453435" description="Decarboxylase nsrE">
    <location>
        <begin position="1"/>
        <end position="151"/>
    </location>
</feature>
<feature type="domain" description="EthD" evidence="1">
    <location>
        <begin position="31"/>
        <end position="126"/>
    </location>
</feature>
<evidence type="ECO:0000255" key="1"/>
<evidence type="ECO:0000269" key="2">
    <source>
    </source>
</evidence>
<evidence type="ECO:0000269" key="3">
    <source>
    </source>
</evidence>
<evidence type="ECO:0000269" key="4">
    <source>
    </source>
</evidence>
<evidence type="ECO:0000303" key="5">
    <source>
    </source>
</evidence>
<evidence type="ECO:0000305" key="6"/>
<sequence>MASSTHPEMPELSGSYENKYLCLTICGYRKAGMTEEDYHNHMVHISAPMTKHLMVKYGIRRWTQIHNQAATRALMAELFDPQMANVADFDCFSQVVFQNVEDYKRMKQDPWYQEHLVGDHENFADTKRTLVTIGWIEEFVRDGEAVDGFKS</sequence>